<feature type="chain" id="PRO_0000065271" description="Uncharacterized protein EEED8.3">
    <location>
        <begin position="1"/>
        <end position="194"/>
    </location>
</feature>
<accession>Q09294</accession>
<dbReference type="EMBL" id="FO081042">
    <property type="protein sequence ID" value="CCD68730.1"/>
    <property type="molecule type" value="Genomic_DNA"/>
</dbReference>
<dbReference type="PIR" id="T15927">
    <property type="entry name" value="T15927"/>
</dbReference>
<dbReference type="RefSeq" id="NP_495025.1">
    <property type="nucleotide sequence ID" value="NM_062624.7"/>
</dbReference>
<dbReference type="SMR" id="Q09294"/>
<dbReference type="BioGRID" id="48844">
    <property type="interactions" value="3"/>
</dbReference>
<dbReference type="DIP" id="DIP-27203N"/>
<dbReference type="FunCoup" id="Q09294">
    <property type="interactions" value="1333"/>
</dbReference>
<dbReference type="IntAct" id="Q09294">
    <property type="interactions" value="2"/>
</dbReference>
<dbReference type="STRING" id="6239.EEED8.3.1"/>
<dbReference type="PaxDb" id="6239-EEED8.3"/>
<dbReference type="PeptideAtlas" id="Q09294"/>
<dbReference type="EnsemblMetazoa" id="EEED8.3.1">
    <property type="protein sequence ID" value="EEED8.3.1"/>
    <property type="gene ID" value="WBGene00017134"/>
</dbReference>
<dbReference type="GeneID" id="184042"/>
<dbReference type="KEGG" id="cel:CELE_EEED8.3"/>
<dbReference type="UCSC" id="EEED8.3">
    <property type="organism name" value="c. elegans"/>
</dbReference>
<dbReference type="AGR" id="WB:WBGene00017134"/>
<dbReference type="CTD" id="184042"/>
<dbReference type="WormBase" id="EEED8.3">
    <property type="protein sequence ID" value="CE01887"/>
    <property type="gene ID" value="WBGene00017134"/>
</dbReference>
<dbReference type="eggNOG" id="ENOG502THV3">
    <property type="taxonomic scope" value="Eukaryota"/>
</dbReference>
<dbReference type="HOGENOM" id="CLU_1476431_0_0_1"/>
<dbReference type="InParanoid" id="Q09294"/>
<dbReference type="OMA" id="KELWKVE"/>
<dbReference type="OrthoDB" id="5794314at2759"/>
<dbReference type="PRO" id="PR:Q09294"/>
<dbReference type="Proteomes" id="UP000001940">
    <property type="component" value="Chromosome II"/>
</dbReference>
<dbReference type="Bgee" id="WBGene00017134">
    <property type="expression patterns" value="Expressed in germ line (C elegans) and 4 other cell types or tissues"/>
</dbReference>
<dbReference type="CDD" id="cd00742">
    <property type="entry name" value="FABP"/>
    <property type="match status" value="1"/>
</dbReference>
<dbReference type="Gene3D" id="2.40.128.20">
    <property type="match status" value="1"/>
</dbReference>
<dbReference type="InterPro" id="IPR012674">
    <property type="entry name" value="Calycin"/>
</dbReference>
<dbReference type="SUPFAM" id="SSF50814">
    <property type="entry name" value="Lipocalins"/>
    <property type="match status" value="1"/>
</dbReference>
<organism>
    <name type="scientific">Caenorhabditis elegans</name>
    <dbReference type="NCBI Taxonomy" id="6239"/>
    <lineage>
        <taxon>Eukaryota</taxon>
        <taxon>Metazoa</taxon>
        <taxon>Ecdysozoa</taxon>
        <taxon>Nematoda</taxon>
        <taxon>Chromadorea</taxon>
        <taxon>Rhabditida</taxon>
        <taxon>Rhabditina</taxon>
        <taxon>Rhabditomorpha</taxon>
        <taxon>Rhabditoidea</taxon>
        <taxon>Rhabditidae</taxon>
        <taxon>Peloderinae</taxon>
        <taxon>Caenorhabditis</taxon>
    </lineage>
</organism>
<keyword id="KW-1185">Reference proteome</keyword>
<evidence type="ECO:0000305" key="1"/>
<gene>
    <name type="ORF">EEED8.3</name>
</gene>
<protein>
    <recommendedName>
        <fullName>Uncharacterized protein EEED8.3</fullName>
    </recommendedName>
</protein>
<sequence>MSTASVLDDIDYDSSFEMVEEEKFEKIENTDNSENFQYVSTKGNTVKEVNINSNEKKKKEAPIQILTAMIGKWKLASSENLQEYFTLEKFPEITQMAWEHGITCYKMNGNQLHVHTDLLGKSLIPTIFEFDKPIARDDNAVSTHAEGNMMSTICKRIADGSIVWKVERLIKNGNLVVFNSRGNFRCKRVYKRVN</sequence>
<reference key="1">
    <citation type="journal article" date="1998" name="Science">
        <title>Genome sequence of the nematode C. elegans: a platform for investigating biology.</title>
        <authorList>
            <consortium name="The C. elegans sequencing consortium"/>
        </authorList>
    </citation>
    <scope>NUCLEOTIDE SEQUENCE [LARGE SCALE GENOMIC DNA]</scope>
    <source>
        <strain>Bristol N2</strain>
    </source>
</reference>
<name>YQO3_CAEEL</name>
<comment type="similarity">
    <text evidence="1">Belongs to the calycin superfamily. Fatty-acid binding protein (FABP) family.</text>
</comment>
<proteinExistence type="inferred from homology"/>